<accession>C0MD77</accession>
<keyword id="KW-0056">Arginine metabolism</keyword>
<keyword id="KW-0963">Cytoplasm</keyword>
<keyword id="KW-0808">Transferase</keyword>
<sequence>MTQVFQGRSFLAEKDFTREEFEYLIDFAAHLKDLKKRGIPHHYLEGKNIALLFEKTSTRTRAAFTTAAIDLGAHPEYLGANDIQLGKKESTEDTAKVLGRMFDGIEFRGFSQRMVEELAEFSGVPVWNGLTDEWHPTQMLADYLTVKENFGKLEGLTLVYCGDGRNNVANSLLVAGTLLGVNVHIFSPKELFPAEDIVKLAEGYAKASGAHVLVTDNADEAVKGADVLYTDVWVSMGEEDKFEERVKLLKPYQVNMELVKKADNDNLIFLHCLPAFHDTNTVYGKDVAEKFGVEEMEVTDEVFRSKYARHFDQAENRMHTIKAVMAATLGNLFIPKV</sequence>
<comment type="function">
    <text evidence="1">Reversibly catalyzes the transfer of the carbamoyl group from carbamoyl phosphate (CP) to the N(epsilon) atom of ornithine (ORN) to produce L-citrulline.</text>
</comment>
<comment type="catalytic activity">
    <reaction evidence="2">
        <text>carbamoyl phosphate + L-ornithine = L-citrulline + phosphate + H(+)</text>
        <dbReference type="Rhea" id="RHEA:19513"/>
        <dbReference type="ChEBI" id="CHEBI:15378"/>
        <dbReference type="ChEBI" id="CHEBI:43474"/>
        <dbReference type="ChEBI" id="CHEBI:46911"/>
        <dbReference type="ChEBI" id="CHEBI:57743"/>
        <dbReference type="ChEBI" id="CHEBI:58228"/>
        <dbReference type="EC" id="2.1.3.3"/>
    </reaction>
</comment>
<comment type="pathway">
    <text evidence="2">Amino-acid degradation; L-arginine degradation via ADI pathway; carbamoyl phosphate from L-arginine: step 2/2.</text>
</comment>
<comment type="subcellular location">
    <subcellularLocation>
        <location evidence="2">Cytoplasm</location>
    </subcellularLocation>
</comment>
<comment type="similarity">
    <text evidence="2">Belongs to the aspartate/ornithine carbamoyltransferase superfamily. OTCase family.</text>
</comment>
<evidence type="ECO:0000250" key="1"/>
<evidence type="ECO:0000255" key="2">
    <source>
        <dbReference type="HAMAP-Rule" id="MF_01109"/>
    </source>
</evidence>
<proteinExistence type="inferred from homology"/>
<feature type="chain" id="PRO_1000213572" description="Ornithine carbamoyltransferase">
    <location>
        <begin position="1"/>
        <end position="337"/>
    </location>
</feature>
<feature type="binding site" evidence="2">
    <location>
        <begin position="57"/>
        <end position="60"/>
    </location>
    <ligand>
        <name>carbamoyl phosphate</name>
        <dbReference type="ChEBI" id="CHEBI:58228"/>
    </ligand>
</feature>
<feature type="binding site" evidence="2">
    <location>
        <position position="84"/>
    </location>
    <ligand>
        <name>carbamoyl phosphate</name>
        <dbReference type="ChEBI" id="CHEBI:58228"/>
    </ligand>
</feature>
<feature type="binding site" evidence="2">
    <location>
        <position position="108"/>
    </location>
    <ligand>
        <name>carbamoyl phosphate</name>
        <dbReference type="ChEBI" id="CHEBI:58228"/>
    </ligand>
</feature>
<feature type="binding site" evidence="2">
    <location>
        <begin position="135"/>
        <end position="138"/>
    </location>
    <ligand>
        <name>carbamoyl phosphate</name>
        <dbReference type="ChEBI" id="CHEBI:58228"/>
    </ligand>
</feature>
<feature type="binding site" evidence="2">
    <location>
        <position position="167"/>
    </location>
    <ligand>
        <name>L-ornithine</name>
        <dbReference type="ChEBI" id="CHEBI:46911"/>
    </ligand>
</feature>
<feature type="binding site" evidence="2">
    <location>
        <position position="231"/>
    </location>
    <ligand>
        <name>L-ornithine</name>
        <dbReference type="ChEBI" id="CHEBI:46911"/>
    </ligand>
</feature>
<feature type="binding site" evidence="2">
    <location>
        <begin position="235"/>
        <end position="236"/>
    </location>
    <ligand>
        <name>L-ornithine</name>
        <dbReference type="ChEBI" id="CHEBI:46911"/>
    </ligand>
</feature>
<feature type="binding site" evidence="2">
    <location>
        <begin position="272"/>
        <end position="273"/>
    </location>
    <ligand>
        <name>carbamoyl phosphate</name>
        <dbReference type="ChEBI" id="CHEBI:58228"/>
    </ligand>
</feature>
<feature type="binding site" evidence="2">
    <location>
        <position position="317"/>
    </location>
    <ligand>
        <name>carbamoyl phosphate</name>
        <dbReference type="ChEBI" id="CHEBI:58228"/>
    </ligand>
</feature>
<gene>
    <name evidence="2" type="primary">arcB</name>
    <name type="ordered locus">SZO_14220</name>
</gene>
<name>OTC_STRS7</name>
<reference key="1">
    <citation type="journal article" date="2009" name="PLoS Pathog.">
        <title>Genomic evidence for the evolution of Streptococcus equi: host restriction, increased virulence, and genetic exchange with human pathogens.</title>
        <authorList>
            <person name="Holden M.T.G."/>
            <person name="Heather Z."/>
            <person name="Paillot R."/>
            <person name="Steward K.F."/>
            <person name="Webb K."/>
            <person name="Ainslie F."/>
            <person name="Jourdan T."/>
            <person name="Bason N.C."/>
            <person name="Holroyd N.E."/>
            <person name="Mungall K."/>
            <person name="Quail M.A."/>
            <person name="Sanders M."/>
            <person name="Simmonds M."/>
            <person name="Willey D."/>
            <person name="Brooks K."/>
            <person name="Aanensen D.M."/>
            <person name="Spratt B.G."/>
            <person name="Jolley K.A."/>
            <person name="Maiden M.C.J."/>
            <person name="Kehoe M."/>
            <person name="Chanter N."/>
            <person name="Bentley S.D."/>
            <person name="Robinson C."/>
            <person name="Maskell D.J."/>
            <person name="Parkhill J."/>
            <person name="Waller A.S."/>
        </authorList>
    </citation>
    <scope>NUCLEOTIDE SEQUENCE [LARGE SCALE GENOMIC DNA]</scope>
    <source>
        <strain>H70</strain>
    </source>
</reference>
<protein>
    <recommendedName>
        <fullName evidence="2">Ornithine carbamoyltransferase</fullName>
        <shortName evidence="2">OTCase</shortName>
        <ecNumber evidence="2">2.1.3.3</ecNumber>
    </recommendedName>
</protein>
<organism>
    <name type="scientific">Streptococcus equi subsp. zooepidemicus (strain H70)</name>
    <dbReference type="NCBI Taxonomy" id="553483"/>
    <lineage>
        <taxon>Bacteria</taxon>
        <taxon>Bacillati</taxon>
        <taxon>Bacillota</taxon>
        <taxon>Bacilli</taxon>
        <taxon>Lactobacillales</taxon>
        <taxon>Streptococcaceae</taxon>
        <taxon>Streptococcus</taxon>
    </lineage>
</organism>
<dbReference type="EC" id="2.1.3.3" evidence="2"/>
<dbReference type="EMBL" id="FM204884">
    <property type="protein sequence ID" value="CAX00027.1"/>
    <property type="molecule type" value="Genomic_DNA"/>
</dbReference>
<dbReference type="SMR" id="C0MD77"/>
<dbReference type="KEGG" id="seq:SZO_14220"/>
<dbReference type="eggNOG" id="COG0078">
    <property type="taxonomic scope" value="Bacteria"/>
</dbReference>
<dbReference type="HOGENOM" id="CLU_043846_3_1_9"/>
<dbReference type="UniPathway" id="UPA00254">
    <property type="reaction ID" value="UER00365"/>
</dbReference>
<dbReference type="Proteomes" id="UP000001368">
    <property type="component" value="Chromosome"/>
</dbReference>
<dbReference type="GO" id="GO:0005737">
    <property type="term" value="C:cytoplasm"/>
    <property type="evidence" value="ECO:0007669"/>
    <property type="project" value="UniProtKB-SubCell"/>
</dbReference>
<dbReference type="GO" id="GO:0016597">
    <property type="term" value="F:amino acid binding"/>
    <property type="evidence" value="ECO:0007669"/>
    <property type="project" value="InterPro"/>
</dbReference>
<dbReference type="GO" id="GO:0004585">
    <property type="term" value="F:ornithine carbamoyltransferase activity"/>
    <property type="evidence" value="ECO:0007669"/>
    <property type="project" value="UniProtKB-UniRule"/>
</dbReference>
<dbReference type="GO" id="GO:0042450">
    <property type="term" value="P:arginine biosynthetic process via ornithine"/>
    <property type="evidence" value="ECO:0007669"/>
    <property type="project" value="TreeGrafter"/>
</dbReference>
<dbReference type="GO" id="GO:0019547">
    <property type="term" value="P:arginine catabolic process to ornithine"/>
    <property type="evidence" value="ECO:0007669"/>
    <property type="project" value="UniProtKB-UniRule"/>
</dbReference>
<dbReference type="GO" id="GO:0019240">
    <property type="term" value="P:citrulline biosynthetic process"/>
    <property type="evidence" value="ECO:0007669"/>
    <property type="project" value="TreeGrafter"/>
</dbReference>
<dbReference type="FunFam" id="3.40.50.1370:FF:000004">
    <property type="entry name" value="Ornithine carbamoyltransferase"/>
    <property type="match status" value="1"/>
</dbReference>
<dbReference type="Gene3D" id="3.40.50.1370">
    <property type="entry name" value="Aspartate/ornithine carbamoyltransferase"/>
    <property type="match status" value="2"/>
</dbReference>
<dbReference type="HAMAP" id="MF_01109">
    <property type="entry name" value="OTCase"/>
    <property type="match status" value="1"/>
</dbReference>
<dbReference type="InterPro" id="IPR006132">
    <property type="entry name" value="Asp/Orn_carbamoyltranf_P-bd"/>
</dbReference>
<dbReference type="InterPro" id="IPR006130">
    <property type="entry name" value="Asp/Orn_carbamoylTrfase"/>
</dbReference>
<dbReference type="InterPro" id="IPR036901">
    <property type="entry name" value="Asp/Orn_carbamoylTrfase_sf"/>
</dbReference>
<dbReference type="InterPro" id="IPR006131">
    <property type="entry name" value="Asp_carbamoyltransf_Asp/Orn-bd"/>
</dbReference>
<dbReference type="InterPro" id="IPR002292">
    <property type="entry name" value="Orn/put_carbamltrans"/>
</dbReference>
<dbReference type="InterPro" id="IPR024904">
    <property type="entry name" value="OTCase_ArgI"/>
</dbReference>
<dbReference type="NCBIfam" id="TIGR00658">
    <property type="entry name" value="orni_carb_tr"/>
    <property type="match status" value="1"/>
</dbReference>
<dbReference type="NCBIfam" id="NF001986">
    <property type="entry name" value="PRK00779.1"/>
    <property type="match status" value="1"/>
</dbReference>
<dbReference type="PANTHER" id="PTHR45753:SF1">
    <property type="entry name" value="ORNITHINE CARBAMOYLTRANSFERASE, CATABOLIC"/>
    <property type="match status" value="1"/>
</dbReference>
<dbReference type="PANTHER" id="PTHR45753">
    <property type="entry name" value="ORNITHINE CARBAMOYLTRANSFERASE, MITOCHONDRIAL"/>
    <property type="match status" value="1"/>
</dbReference>
<dbReference type="Pfam" id="PF00185">
    <property type="entry name" value="OTCace"/>
    <property type="match status" value="1"/>
</dbReference>
<dbReference type="Pfam" id="PF02729">
    <property type="entry name" value="OTCace_N"/>
    <property type="match status" value="1"/>
</dbReference>
<dbReference type="PRINTS" id="PR00100">
    <property type="entry name" value="AOTCASE"/>
</dbReference>
<dbReference type="PRINTS" id="PR00102">
    <property type="entry name" value="OTCASE"/>
</dbReference>
<dbReference type="SUPFAM" id="SSF53671">
    <property type="entry name" value="Aspartate/ornithine carbamoyltransferase"/>
    <property type="match status" value="1"/>
</dbReference>
<dbReference type="PROSITE" id="PS00097">
    <property type="entry name" value="CARBAMOYLTRANSFERASE"/>
    <property type="match status" value="1"/>
</dbReference>